<gene>
    <name type="primary">yomT</name>
    <name type="ordered locus">BSU21230</name>
</gene>
<feature type="chain" id="PRO_0000360598" description="SPbeta prophage-derived uncharacterized protein YomT">
    <location>
        <begin position="1"/>
        <end position="75"/>
    </location>
</feature>
<reference key="1">
    <citation type="journal article" date="1997" name="Nature">
        <title>The complete genome sequence of the Gram-positive bacterium Bacillus subtilis.</title>
        <authorList>
            <person name="Kunst F."/>
            <person name="Ogasawara N."/>
            <person name="Moszer I."/>
            <person name="Albertini A.M."/>
            <person name="Alloni G."/>
            <person name="Azevedo V."/>
            <person name="Bertero M.G."/>
            <person name="Bessieres P."/>
            <person name="Bolotin A."/>
            <person name="Borchert S."/>
            <person name="Borriss R."/>
            <person name="Boursier L."/>
            <person name="Brans A."/>
            <person name="Braun M."/>
            <person name="Brignell S.C."/>
            <person name="Bron S."/>
            <person name="Brouillet S."/>
            <person name="Bruschi C.V."/>
            <person name="Caldwell B."/>
            <person name="Capuano V."/>
            <person name="Carter N.M."/>
            <person name="Choi S.-K."/>
            <person name="Codani J.-J."/>
            <person name="Connerton I.F."/>
            <person name="Cummings N.J."/>
            <person name="Daniel R.A."/>
            <person name="Denizot F."/>
            <person name="Devine K.M."/>
            <person name="Duesterhoeft A."/>
            <person name="Ehrlich S.D."/>
            <person name="Emmerson P.T."/>
            <person name="Entian K.-D."/>
            <person name="Errington J."/>
            <person name="Fabret C."/>
            <person name="Ferrari E."/>
            <person name="Foulger D."/>
            <person name="Fritz C."/>
            <person name="Fujita M."/>
            <person name="Fujita Y."/>
            <person name="Fuma S."/>
            <person name="Galizzi A."/>
            <person name="Galleron N."/>
            <person name="Ghim S.-Y."/>
            <person name="Glaser P."/>
            <person name="Goffeau A."/>
            <person name="Golightly E.J."/>
            <person name="Grandi G."/>
            <person name="Guiseppi G."/>
            <person name="Guy B.J."/>
            <person name="Haga K."/>
            <person name="Haiech J."/>
            <person name="Harwood C.R."/>
            <person name="Henaut A."/>
            <person name="Hilbert H."/>
            <person name="Holsappel S."/>
            <person name="Hosono S."/>
            <person name="Hullo M.-F."/>
            <person name="Itaya M."/>
            <person name="Jones L.-M."/>
            <person name="Joris B."/>
            <person name="Karamata D."/>
            <person name="Kasahara Y."/>
            <person name="Klaerr-Blanchard M."/>
            <person name="Klein C."/>
            <person name="Kobayashi Y."/>
            <person name="Koetter P."/>
            <person name="Koningstein G."/>
            <person name="Krogh S."/>
            <person name="Kumano M."/>
            <person name="Kurita K."/>
            <person name="Lapidus A."/>
            <person name="Lardinois S."/>
            <person name="Lauber J."/>
            <person name="Lazarevic V."/>
            <person name="Lee S.-M."/>
            <person name="Levine A."/>
            <person name="Liu H."/>
            <person name="Masuda S."/>
            <person name="Mauel C."/>
            <person name="Medigue C."/>
            <person name="Medina N."/>
            <person name="Mellado R.P."/>
            <person name="Mizuno M."/>
            <person name="Moestl D."/>
            <person name="Nakai S."/>
            <person name="Noback M."/>
            <person name="Noone D."/>
            <person name="O'Reilly M."/>
            <person name="Ogawa K."/>
            <person name="Ogiwara A."/>
            <person name="Oudega B."/>
            <person name="Park S.-H."/>
            <person name="Parro V."/>
            <person name="Pohl T.M."/>
            <person name="Portetelle D."/>
            <person name="Porwollik S."/>
            <person name="Prescott A.M."/>
            <person name="Presecan E."/>
            <person name="Pujic P."/>
            <person name="Purnelle B."/>
            <person name="Rapoport G."/>
            <person name="Rey M."/>
            <person name="Reynolds S."/>
            <person name="Rieger M."/>
            <person name="Rivolta C."/>
            <person name="Rocha E."/>
            <person name="Roche B."/>
            <person name="Rose M."/>
            <person name="Sadaie Y."/>
            <person name="Sato T."/>
            <person name="Scanlan E."/>
            <person name="Schleich S."/>
            <person name="Schroeter R."/>
            <person name="Scoffone F."/>
            <person name="Sekiguchi J."/>
            <person name="Sekowska A."/>
            <person name="Seror S.J."/>
            <person name="Serror P."/>
            <person name="Shin B.-S."/>
            <person name="Soldo B."/>
            <person name="Sorokin A."/>
            <person name="Tacconi E."/>
            <person name="Takagi T."/>
            <person name="Takahashi H."/>
            <person name="Takemaru K."/>
            <person name="Takeuchi M."/>
            <person name="Tamakoshi A."/>
            <person name="Tanaka T."/>
            <person name="Terpstra P."/>
            <person name="Tognoni A."/>
            <person name="Tosato V."/>
            <person name="Uchiyama S."/>
            <person name="Vandenbol M."/>
            <person name="Vannier F."/>
            <person name="Vassarotti A."/>
            <person name="Viari A."/>
            <person name="Wambutt R."/>
            <person name="Wedler E."/>
            <person name="Wedler H."/>
            <person name="Weitzenegger T."/>
            <person name="Winters P."/>
            <person name="Wipat A."/>
            <person name="Yamamoto H."/>
            <person name="Yamane K."/>
            <person name="Yasumoto K."/>
            <person name="Yata K."/>
            <person name="Yoshida K."/>
            <person name="Yoshikawa H.-F."/>
            <person name="Zumstein E."/>
            <person name="Yoshikawa H."/>
            <person name="Danchin A."/>
        </authorList>
    </citation>
    <scope>NUCLEOTIDE SEQUENCE [LARGE SCALE GENOMIC DNA]</scope>
    <source>
        <strain>168</strain>
    </source>
</reference>
<sequence>MTFDEVCGLFKQFDGLEQKFLLLSDGSYISVDDFKQRFEGDFNEYEPLSSLQSSPSSTPAWEGIWNKLQEDGLFE</sequence>
<keyword id="KW-1185">Reference proteome</keyword>
<organism>
    <name type="scientific">Bacillus subtilis (strain 168)</name>
    <dbReference type="NCBI Taxonomy" id="224308"/>
    <lineage>
        <taxon>Bacteria</taxon>
        <taxon>Bacillati</taxon>
        <taxon>Bacillota</taxon>
        <taxon>Bacilli</taxon>
        <taxon>Bacillales</taxon>
        <taxon>Bacillaceae</taxon>
        <taxon>Bacillus</taxon>
    </lineage>
</organism>
<proteinExistence type="predicted"/>
<name>YOMT_BACSU</name>
<accession>O31964</accession>
<protein>
    <recommendedName>
        <fullName>SPbeta prophage-derived uncharacterized protein YomT</fullName>
    </recommendedName>
</protein>
<dbReference type="EMBL" id="AL009126">
    <property type="protein sequence ID" value="CAB14041.1"/>
    <property type="molecule type" value="Genomic_DNA"/>
</dbReference>
<dbReference type="RefSeq" id="NP_390006.1">
    <property type="nucleotide sequence ID" value="NC_000964.3"/>
</dbReference>
<dbReference type="RefSeq" id="WP_009967521.1">
    <property type="nucleotide sequence ID" value="NZ_OZ025638.1"/>
</dbReference>
<dbReference type="FunCoup" id="O31964">
    <property type="interactions" value="58"/>
</dbReference>
<dbReference type="STRING" id="224308.BSU21230"/>
<dbReference type="PaxDb" id="224308-BSU21230"/>
<dbReference type="EnsemblBacteria" id="CAB14041">
    <property type="protein sequence ID" value="CAB14041"/>
    <property type="gene ID" value="BSU_21230"/>
</dbReference>
<dbReference type="GeneID" id="939151"/>
<dbReference type="KEGG" id="bsu:BSU21230"/>
<dbReference type="PATRIC" id="fig|224308.179.peg.2318"/>
<dbReference type="InParanoid" id="O31964"/>
<dbReference type="OrthoDB" id="2919824at2"/>
<dbReference type="BioCyc" id="BSUB:BSU21230-MONOMER"/>
<dbReference type="Proteomes" id="UP000001570">
    <property type="component" value="Chromosome"/>
</dbReference>